<comment type="subcellular location">
    <subcellularLocation>
        <location evidence="1">Cell inner membrane</location>
        <topology evidence="1">Multi-pass membrane protein</topology>
    </subcellularLocation>
</comment>
<comment type="similarity">
    <text evidence="1">Belongs to the UPF0283 family.</text>
</comment>
<protein>
    <recommendedName>
        <fullName evidence="1">UPF0283 membrane protein YcjF</fullName>
    </recommendedName>
</protein>
<proteinExistence type="inferred from homology"/>
<dbReference type="EMBL" id="CP000857">
    <property type="protein sequence ID" value="ACN46183.1"/>
    <property type="molecule type" value="Genomic_DNA"/>
</dbReference>
<dbReference type="RefSeq" id="WP_001294463.1">
    <property type="nucleotide sequence ID" value="NC_012125.1"/>
</dbReference>
<dbReference type="SMR" id="C0Q3S8"/>
<dbReference type="KEGG" id="sei:SPC_2048"/>
<dbReference type="HOGENOM" id="CLU_057693_2_0_6"/>
<dbReference type="Proteomes" id="UP000001599">
    <property type="component" value="Chromosome"/>
</dbReference>
<dbReference type="GO" id="GO:0005886">
    <property type="term" value="C:plasma membrane"/>
    <property type="evidence" value="ECO:0007669"/>
    <property type="project" value="UniProtKB-SubCell"/>
</dbReference>
<dbReference type="HAMAP" id="MF_01085">
    <property type="entry name" value="UPF0283"/>
    <property type="match status" value="1"/>
</dbReference>
<dbReference type="InterPro" id="IPR021147">
    <property type="entry name" value="DUF697"/>
</dbReference>
<dbReference type="InterPro" id="IPR006507">
    <property type="entry name" value="UPF0283"/>
</dbReference>
<dbReference type="NCBIfam" id="TIGR01620">
    <property type="entry name" value="hyp_HI0043"/>
    <property type="match status" value="1"/>
</dbReference>
<dbReference type="PANTHER" id="PTHR39342">
    <property type="entry name" value="UPF0283 MEMBRANE PROTEIN YCJF"/>
    <property type="match status" value="1"/>
</dbReference>
<dbReference type="PANTHER" id="PTHR39342:SF1">
    <property type="entry name" value="UPF0283 MEMBRANE PROTEIN YCJF"/>
    <property type="match status" value="1"/>
</dbReference>
<dbReference type="Pfam" id="PF05128">
    <property type="entry name" value="DUF697"/>
    <property type="match status" value="1"/>
</dbReference>
<organism>
    <name type="scientific">Salmonella paratyphi C (strain RKS4594)</name>
    <dbReference type="NCBI Taxonomy" id="476213"/>
    <lineage>
        <taxon>Bacteria</taxon>
        <taxon>Pseudomonadati</taxon>
        <taxon>Pseudomonadota</taxon>
        <taxon>Gammaproteobacteria</taxon>
        <taxon>Enterobacterales</taxon>
        <taxon>Enterobacteriaceae</taxon>
        <taxon>Salmonella</taxon>
    </lineage>
</organism>
<reference key="1">
    <citation type="journal article" date="2009" name="PLoS ONE">
        <title>Salmonella paratyphi C: genetic divergence from Salmonella choleraesuis and pathogenic convergence with Salmonella typhi.</title>
        <authorList>
            <person name="Liu W.-Q."/>
            <person name="Feng Y."/>
            <person name="Wang Y."/>
            <person name="Zou Q.-H."/>
            <person name="Chen F."/>
            <person name="Guo J.-T."/>
            <person name="Peng Y.-H."/>
            <person name="Jin Y."/>
            <person name="Li Y.-G."/>
            <person name="Hu S.-N."/>
            <person name="Johnston R.N."/>
            <person name="Liu G.-R."/>
            <person name="Liu S.-L."/>
        </authorList>
    </citation>
    <scope>NUCLEOTIDE SEQUENCE [LARGE SCALE GENOMIC DNA]</scope>
    <source>
        <strain>RKS4594</strain>
    </source>
</reference>
<keyword id="KW-0997">Cell inner membrane</keyword>
<keyword id="KW-1003">Cell membrane</keyword>
<keyword id="KW-0472">Membrane</keyword>
<keyword id="KW-0812">Transmembrane</keyword>
<keyword id="KW-1133">Transmembrane helix</keyword>
<evidence type="ECO:0000255" key="1">
    <source>
        <dbReference type="HAMAP-Rule" id="MF_01085"/>
    </source>
</evidence>
<evidence type="ECO:0000256" key="2">
    <source>
        <dbReference type="SAM" id="MobiDB-lite"/>
    </source>
</evidence>
<name>YCJF_SALPC</name>
<feature type="chain" id="PRO_1000149866" description="UPF0283 membrane protein YcjF">
    <location>
        <begin position="1"/>
        <end position="353"/>
    </location>
</feature>
<feature type="transmembrane region" description="Helical" evidence="1">
    <location>
        <begin position="70"/>
        <end position="90"/>
    </location>
</feature>
<feature type="transmembrane region" description="Helical" evidence="1">
    <location>
        <begin position="100"/>
        <end position="120"/>
    </location>
</feature>
<feature type="transmembrane region" description="Helical" evidence="1">
    <location>
        <begin position="213"/>
        <end position="233"/>
    </location>
</feature>
<feature type="region of interest" description="Disordered" evidence="2">
    <location>
        <begin position="1"/>
        <end position="35"/>
    </location>
</feature>
<feature type="compositionally biased region" description="Basic and acidic residues" evidence="2">
    <location>
        <begin position="1"/>
        <end position="19"/>
    </location>
</feature>
<sequence>MSEPLKPRIDFAEPLKEEPTSAFKAQQTFSEAESRTFAPAAIDERPEDEGVAEAAVDAALRPKRSLWRKMVMGGLALFGASVVGQGVQWTMNAWQTQDWVALGGCAAGALIIGAGVGSVVTEWRRLWRLRQRAHERDEARELLHSHSVGKGRAFCEKLAQQAGIDQSHPALQRWYAAIHETQNDREIVGLYAHLVQPVLDAQARREISRFAAESTLMIAVSPLALVDMAFIAWRNLRLINRIATLYGIELGYYSRLRLFRLVLLNIAFAGASELVREVGMDWMSQDLAARLSTRAAQGIGAGLLTARLGIKAMELCRPLPWIDNDKPRLGDFRRQLIGQLKETLQKSKSSPEK</sequence>
<accession>C0Q3S8</accession>
<gene>
    <name evidence="1" type="primary">ycjF</name>
    <name type="ordered locus">SPC_2048</name>
</gene>